<feature type="chain" id="PRO_0000424117" description="Verruculogen prenyltransferase">
    <location>
        <begin position="1"/>
        <end position="453"/>
    </location>
</feature>
<feature type="binding site" evidence="2">
    <location>
        <position position="89"/>
    </location>
    <ligand>
        <name>substrate</name>
    </ligand>
</feature>
<feature type="binding site" evidence="2">
    <location>
        <position position="102"/>
    </location>
    <ligand>
        <name>dimethylallyl diphosphate</name>
        <dbReference type="ChEBI" id="CHEBI:57623"/>
    </ligand>
</feature>
<feature type="binding site" evidence="2">
    <location>
        <position position="194"/>
    </location>
    <ligand>
        <name>dimethylallyl diphosphate</name>
        <dbReference type="ChEBI" id="CHEBI:57623"/>
    </ligand>
</feature>
<feature type="binding site" evidence="2">
    <location>
        <position position="196"/>
    </location>
    <ligand>
        <name>dimethylallyl diphosphate</name>
        <dbReference type="ChEBI" id="CHEBI:57623"/>
    </ligand>
</feature>
<feature type="binding site" evidence="2">
    <location>
        <position position="273"/>
    </location>
    <ligand>
        <name>dimethylallyl diphosphate</name>
        <dbReference type="ChEBI" id="CHEBI:57623"/>
    </ligand>
</feature>
<feature type="binding site" evidence="2">
    <location>
        <position position="275"/>
    </location>
    <ligand>
        <name>dimethylallyl diphosphate</name>
        <dbReference type="ChEBI" id="CHEBI:57623"/>
    </ligand>
</feature>
<feature type="binding site" evidence="2">
    <location>
        <position position="378"/>
    </location>
    <ligand>
        <name>dimethylallyl diphosphate</name>
        <dbReference type="ChEBI" id="CHEBI:57623"/>
    </ligand>
</feature>
<feature type="binding site" evidence="2">
    <location>
        <position position="443"/>
    </location>
    <ligand>
        <name>dimethylallyl diphosphate</name>
        <dbReference type="ChEBI" id="CHEBI:57623"/>
    </ligand>
</feature>
<feature type="binding site" evidence="2">
    <location>
        <position position="447"/>
    </location>
    <ligand>
        <name>dimethylallyl diphosphate</name>
        <dbReference type="ChEBI" id="CHEBI:57623"/>
    </ligand>
</feature>
<feature type="site" description="Required for regioselectivity" evidence="2">
    <location>
        <position position="104"/>
    </location>
</feature>
<dbReference type="EC" id="2.5.1.107" evidence="3"/>
<dbReference type="EMBL" id="DS027696">
    <property type="protein sequence ID" value="EAW19377.1"/>
    <property type="molecule type" value="Genomic_DNA"/>
</dbReference>
<dbReference type="RefSeq" id="XP_001261274.1">
    <property type="nucleotide sequence ID" value="XM_001261273.1"/>
</dbReference>
<dbReference type="SMR" id="A1DJ20"/>
<dbReference type="STRING" id="331117.A1DJ20"/>
<dbReference type="EnsemblFungi" id="EAW19377">
    <property type="protein sequence ID" value="EAW19377"/>
    <property type="gene ID" value="NFIA_093400"/>
</dbReference>
<dbReference type="GeneID" id="4587832"/>
<dbReference type="KEGG" id="nfi:NFIA_093400"/>
<dbReference type="VEuPathDB" id="FungiDB:NFIA_093400"/>
<dbReference type="eggNOG" id="ENOG502RHNQ">
    <property type="taxonomic scope" value="Eukaryota"/>
</dbReference>
<dbReference type="HOGENOM" id="CLU_037431_0_0_1"/>
<dbReference type="OMA" id="RENMAAC"/>
<dbReference type="OrthoDB" id="5392033at2759"/>
<dbReference type="BioCyc" id="MetaCyc:MONOMER-18772"/>
<dbReference type="BRENDA" id="2.5.1.107">
    <property type="organism ID" value="504"/>
</dbReference>
<dbReference type="Proteomes" id="UP000006702">
    <property type="component" value="Unassembled WGS sequence"/>
</dbReference>
<dbReference type="GO" id="GO:0004659">
    <property type="term" value="F:prenyltransferase activity"/>
    <property type="evidence" value="ECO:0007669"/>
    <property type="project" value="UniProtKB-KW"/>
</dbReference>
<dbReference type="GO" id="GO:0009820">
    <property type="term" value="P:alkaloid metabolic process"/>
    <property type="evidence" value="ECO:0007669"/>
    <property type="project" value="UniProtKB-KW"/>
</dbReference>
<dbReference type="CDD" id="cd13929">
    <property type="entry name" value="PT-DMATS_CymD"/>
    <property type="match status" value="1"/>
</dbReference>
<dbReference type="InterPro" id="IPR033964">
    <property type="entry name" value="Aro_prenylTrfase"/>
</dbReference>
<dbReference type="InterPro" id="IPR017795">
    <property type="entry name" value="Aro_prenylTrfase_DMATS"/>
</dbReference>
<dbReference type="InterPro" id="IPR012148">
    <property type="entry name" value="DMATS-type_fun"/>
</dbReference>
<dbReference type="NCBIfam" id="TIGR03429">
    <property type="entry name" value="arom_pren_DMATS"/>
    <property type="match status" value="1"/>
</dbReference>
<dbReference type="PANTHER" id="PTHR40627">
    <property type="entry name" value="INDOLE PRENYLTRANSFERASE TDIB-RELATED"/>
    <property type="match status" value="1"/>
</dbReference>
<dbReference type="PANTHER" id="PTHR40627:SF3">
    <property type="entry name" value="PRENYLTRANSFERASE ASQH2-RELATED"/>
    <property type="match status" value="1"/>
</dbReference>
<dbReference type="Pfam" id="PF11991">
    <property type="entry name" value="Trp_DMAT"/>
    <property type="match status" value="1"/>
</dbReference>
<dbReference type="PIRSF" id="PIRSF000509">
    <property type="entry name" value="Trp_DMAT"/>
    <property type="match status" value="1"/>
</dbReference>
<dbReference type="SFLD" id="SFLDS00036">
    <property type="entry name" value="Aromatic_Prenyltransferase"/>
    <property type="match status" value="1"/>
</dbReference>
<dbReference type="SFLD" id="SFLDG01162">
    <property type="entry name" value="I"/>
    <property type="match status" value="1"/>
</dbReference>
<comment type="function">
    <text evidence="1 3">Verruculogen prenyltransferase; part of the gene cluster that mediates the biosynthesis of fumitremorgins, indole alkaloids that carry not only intriguing chemical structures, but also interesting biological and pharmacological activities (PubMed:23109474). The biosynthesis of fumitremorgin-type alkaloids begins by condensation of the two amino acids L-tryptophan and L-proline to brevianamide F, catalyzed by the non-ribosomal peptide synthetase ftmPS/ftmA (By similarity). Brevianamide F is then prenylated by the prenyltransferase ftmPT1/ftmB in the presence of dimethylallyl diphosphate, resulting in the formation of tryprostatin B (By similarity). The three cytochrome P450 monooxygenases, ftmP450-1/ftmC, ftmP450-2/ftmE and ftmP450-3/FtmG, are responsible for the conversion of tryprostatin B to 6-hydroxytryprostatin B, tryprostatin A to fumitremorgin C and fumitremorgin C to 12,13-dihydroxyfumitremorgin C, respectively (By similarity). The putative methyltransferase ftmMT/ftmD is expected for the conversion of 6-hydroxytryprostatin B to tryprostatin A (By similarity). FtmPT2/FtmH catalyzes the prenylation of 12,13-dihydroxyfumitre-morgin C in the presence of dimethylallyl diphosphate, resulting in the formation of fumitremorgin B (By similarity). Fumitremorgin B is further converted to verruculogen by ftmOx1/ftmF via the insertion of an endoperoxide bond between the two prenyl moieties (By similarity). Finally, verruculogen is further converted to fumitremorgin A by the verruculogen prenyltransferase ftmPT3 (PubMed:23109474).</text>
</comment>
<comment type="catalytic activity">
    <reaction evidence="3">
        <text>verruculogen + dimethylallyl diphosphate = fumitremorgin A + diphosphate</text>
        <dbReference type="Rhea" id="RHEA:35979"/>
        <dbReference type="ChEBI" id="CHEBI:33019"/>
        <dbReference type="ChEBI" id="CHEBI:57623"/>
        <dbReference type="ChEBI" id="CHEBI:72765"/>
        <dbReference type="ChEBI" id="CHEBI:72766"/>
        <dbReference type="EC" id="2.5.1.107"/>
    </reaction>
</comment>
<comment type="biophysicochemical properties">
    <kinetics>
        <KM evidence="3">61.5 uM for dimethylallyl diphosphate</KM>
        <KM evidence="3">5.7 uM for verruculogen</KM>
        <text evidence="3">kcat is 0.069 sec(-1).</text>
    </kinetics>
</comment>
<comment type="pathway">
    <text evidence="3">Mycotoxin biosynthesis.</text>
</comment>
<comment type="similarity">
    <text evidence="5">Belongs to the tryptophan dimethylallyltransferase family.</text>
</comment>
<name>FTMT3_NEOFI</name>
<sequence>MTIHPQNHDLPTGSAMKATPFEALDLVFHFEDQAQRQWWKQAGPVLGQHLLLANYDINKQYQYLCFFGHHIIPILGPGPGSGYDYHPLEISQNFQRSGSTIRLGFQPRAYSSCVSPQDPFGELSTEEAMARLGQVTGVELDLQPYHLLASHLNLTKKEEKEMLQPTCYNSLSPSFKTQGLLAVELPRTGSITLKGYWFLSAKSMVTKTPISELSFQAFRNIDHGKDLLVPALRPIEEYFAEMKMKPANPTTPQTTEFATVACDHVDMSRTRFKLYLYECLWKYDRLADIYTLGGRLKNAPGIAEGLELLREIWSILQIPEGYHFASLQNSLLRKSTNAESCGEASKPASEEREFFDDQALIFNFEIRPGEKWPQPKVYFPLAYLTDSKAADAVVALFEKLGWKEEARRYKDNLKTYYPRCDLDKTSGLQHVLSFSYRPKTGPYTTVYYWKIGA</sequence>
<gene>
    <name evidence="4" type="primary">ftmPT3</name>
    <name type="ORF">NFIA_093400</name>
</gene>
<accession>A1DJ20</accession>
<proteinExistence type="evidence at protein level"/>
<keyword id="KW-0017">Alkaloid metabolism</keyword>
<keyword id="KW-0637">Prenyltransferase</keyword>
<keyword id="KW-1185">Reference proteome</keyword>
<keyword id="KW-0808">Transferase</keyword>
<keyword id="KW-0843">Virulence</keyword>
<protein>
    <recommendedName>
        <fullName evidence="4">Verruculogen prenyltransferase</fullName>
        <ecNumber evidence="3">2.5.1.107</ecNumber>
    </recommendedName>
</protein>
<reference key="1">
    <citation type="journal article" date="2008" name="PLoS Genet.">
        <title>Genomic islands in the pathogenic filamentous fungus Aspergillus fumigatus.</title>
        <authorList>
            <person name="Fedorova N.D."/>
            <person name="Khaldi N."/>
            <person name="Joardar V.S."/>
            <person name="Maiti R."/>
            <person name="Amedeo P."/>
            <person name="Anderson M.J."/>
            <person name="Crabtree J."/>
            <person name="Silva J.C."/>
            <person name="Badger J.H."/>
            <person name="Albarraq A."/>
            <person name="Angiuoli S."/>
            <person name="Bussey H."/>
            <person name="Bowyer P."/>
            <person name="Cotty P.J."/>
            <person name="Dyer P.S."/>
            <person name="Egan A."/>
            <person name="Galens K."/>
            <person name="Fraser-Liggett C.M."/>
            <person name="Haas B.J."/>
            <person name="Inman J.M."/>
            <person name="Kent R."/>
            <person name="Lemieux S."/>
            <person name="Malavazi I."/>
            <person name="Orvis J."/>
            <person name="Roemer T."/>
            <person name="Ronning C.M."/>
            <person name="Sundaram J.P."/>
            <person name="Sutton G."/>
            <person name="Turner G."/>
            <person name="Venter J.C."/>
            <person name="White O.R."/>
            <person name="Whitty B.R."/>
            <person name="Youngman P."/>
            <person name="Wolfe K.H."/>
            <person name="Goldman G.H."/>
            <person name="Wortman J.R."/>
            <person name="Jiang B."/>
            <person name="Denning D.W."/>
            <person name="Nierman W.C."/>
        </authorList>
    </citation>
    <scope>NUCLEOTIDE SEQUENCE [LARGE SCALE GENOMIC DNA]</scope>
    <source>
        <strain>ATCC 1020 / DSM 3700 / CBS 544.65 / FGSC A1164 / JCM 1740 / NRRL 181 / WB 181</strain>
    </source>
</reference>
<reference key="2">
    <citation type="journal article" date="2012" name="ChemBioChem">
        <title>Identification of the verruculogen prenyltransferase FtmPT3 by a combination of chemical, bioinformatic and biochemical approaches.</title>
        <authorList>
            <person name="Mundt K."/>
            <person name="Wollinsky B."/>
            <person name="Ruan H.L."/>
            <person name="Zhu T."/>
            <person name="Li S.M."/>
        </authorList>
    </citation>
    <scope>FUNCTION</scope>
    <scope>CATALYTIC ACTIVITY</scope>
    <scope>BIOPHYSICOCHEMICAL PROPERTIES</scope>
    <scope>PATHWAY</scope>
</reference>
<evidence type="ECO:0000250" key="1">
    <source>
        <dbReference type="UniProtKB" id="Q4WAW3"/>
    </source>
</evidence>
<evidence type="ECO:0000250" key="2">
    <source>
        <dbReference type="UniProtKB" id="Q4WAW7"/>
    </source>
</evidence>
<evidence type="ECO:0000269" key="3">
    <source>
    </source>
</evidence>
<evidence type="ECO:0000303" key="4">
    <source>
    </source>
</evidence>
<evidence type="ECO:0000305" key="5"/>
<organism>
    <name type="scientific">Neosartorya fischeri (strain ATCC 1020 / DSM 3700 / CBS 544.65 / FGSC A1164 / JCM 1740 / NRRL 181 / WB 181)</name>
    <name type="common">Aspergillus fischerianus</name>
    <dbReference type="NCBI Taxonomy" id="331117"/>
    <lineage>
        <taxon>Eukaryota</taxon>
        <taxon>Fungi</taxon>
        <taxon>Dikarya</taxon>
        <taxon>Ascomycota</taxon>
        <taxon>Pezizomycotina</taxon>
        <taxon>Eurotiomycetes</taxon>
        <taxon>Eurotiomycetidae</taxon>
        <taxon>Eurotiales</taxon>
        <taxon>Aspergillaceae</taxon>
        <taxon>Aspergillus</taxon>
        <taxon>Aspergillus subgen. Fumigati</taxon>
    </lineage>
</organism>